<sequence>MTVYEGSFTPPARPFRFALVIARFNDLVTEKLLSGCQDCLKRHGIDVDPAGTQVDYIWVPGSFEVPLVTRKLAVSGQYDAIICLGAVIRGQTPHFDFVAGEAAKGIAAIASQTGVPVIFGILTTDTMQQALERAGIKSNHGWGYAMNALEMASLMRAMAPLTEG</sequence>
<protein>
    <recommendedName>
        <fullName evidence="1">6,7-dimethyl-8-ribityllumazine synthase</fullName>
        <shortName evidence="1">DMRL synthase</shortName>
        <shortName evidence="1">LS</shortName>
        <shortName evidence="1">Lumazine synthase</shortName>
        <ecNumber evidence="1">2.5.1.78</ecNumber>
    </recommendedName>
</protein>
<reference key="1">
    <citation type="journal article" date="1996" name="DNA Res.">
        <title>Sequence analysis of the genome of the unicellular cyanobacterium Synechocystis sp. strain PCC6803. II. Sequence determination of the entire genome and assignment of potential protein-coding regions.</title>
        <authorList>
            <person name="Kaneko T."/>
            <person name="Sato S."/>
            <person name="Kotani H."/>
            <person name="Tanaka A."/>
            <person name="Asamizu E."/>
            <person name="Nakamura Y."/>
            <person name="Miyajima N."/>
            <person name="Hirosawa M."/>
            <person name="Sugiura M."/>
            <person name="Sasamoto S."/>
            <person name="Kimura T."/>
            <person name="Hosouchi T."/>
            <person name="Matsuno A."/>
            <person name="Muraki A."/>
            <person name="Nakazaki N."/>
            <person name="Naruo K."/>
            <person name="Okumura S."/>
            <person name="Shimpo S."/>
            <person name="Takeuchi C."/>
            <person name="Wada T."/>
            <person name="Watanabe A."/>
            <person name="Yamada M."/>
            <person name="Yasuda M."/>
            <person name="Tabata S."/>
        </authorList>
    </citation>
    <scope>NUCLEOTIDE SEQUENCE [LARGE SCALE GENOMIC DNA]</scope>
    <source>
        <strain>ATCC 27184 / PCC 6803 / Kazusa</strain>
    </source>
</reference>
<proteinExistence type="inferred from homology"/>
<dbReference type="EC" id="2.5.1.78" evidence="1"/>
<dbReference type="EMBL" id="BA000022">
    <property type="protein sequence ID" value="BAA17567.1"/>
    <property type="molecule type" value="Genomic_DNA"/>
</dbReference>
<dbReference type="PIR" id="S77233">
    <property type="entry name" value="S77233"/>
</dbReference>
<dbReference type="SMR" id="P73527"/>
<dbReference type="FunCoup" id="P73527">
    <property type="interactions" value="468"/>
</dbReference>
<dbReference type="STRING" id="1148.gene:10498433"/>
<dbReference type="PaxDb" id="1148-1652647"/>
<dbReference type="EnsemblBacteria" id="BAA17567">
    <property type="protein sequence ID" value="BAA17567"/>
    <property type="gene ID" value="BAA17567"/>
</dbReference>
<dbReference type="KEGG" id="syn:sll1282"/>
<dbReference type="eggNOG" id="COG0054">
    <property type="taxonomic scope" value="Bacteria"/>
</dbReference>
<dbReference type="InParanoid" id="P73527"/>
<dbReference type="PhylomeDB" id="P73527"/>
<dbReference type="BRENDA" id="2.5.1.78">
    <property type="organism ID" value="382"/>
</dbReference>
<dbReference type="UniPathway" id="UPA00275">
    <property type="reaction ID" value="UER00404"/>
</dbReference>
<dbReference type="Proteomes" id="UP000001425">
    <property type="component" value="Chromosome"/>
</dbReference>
<dbReference type="GO" id="GO:0005737">
    <property type="term" value="C:cytoplasm"/>
    <property type="evidence" value="ECO:0000318"/>
    <property type="project" value="GO_Central"/>
</dbReference>
<dbReference type="GO" id="GO:0005829">
    <property type="term" value="C:cytosol"/>
    <property type="evidence" value="ECO:0000318"/>
    <property type="project" value="GO_Central"/>
</dbReference>
<dbReference type="GO" id="GO:0009349">
    <property type="term" value="C:riboflavin synthase complex"/>
    <property type="evidence" value="ECO:0007669"/>
    <property type="project" value="InterPro"/>
</dbReference>
<dbReference type="GO" id="GO:0000906">
    <property type="term" value="F:6,7-dimethyl-8-ribityllumazine synthase activity"/>
    <property type="evidence" value="ECO:0000318"/>
    <property type="project" value="GO_Central"/>
</dbReference>
<dbReference type="GO" id="GO:0009231">
    <property type="term" value="P:riboflavin biosynthetic process"/>
    <property type="evidence" value="ECO:0000318"/>
    <property type="project" value="GO_Central"/>
</dbReference>
<dbReference type="CDD" id="cd09209">
    <property type="entry name" value="Lumazine_synthase-I"/>
    <property type="match status" value="1"/>
</dbReference>
<dbReference type="FunFam" id="3.40.50.960:FF:000001">
    <property type="entry name" value="6,7-dimethyl-8-ribityllumazine synthase"/>
    <property type="match status" value="1"/>
</dbReference>
<dbReference type="Gene3D" id="3.40.50.960">
    <property type="entry name" value="Lumazine/riboflavin synthase"/>
    <property type="match status" value="1"/>
</dbReference>
<dbReference type="HAMAP" id="MF_00178">
    <property type="entry name" value="Lumazine_synth"/>
    <property type="match status" value="1"/>
</dbReference>
<dbReference type="InterPro" id="IPR034964">
    <property type="entry name" value="LS"/>
</dbReference>
<dbReference type="InterPro" id="IPR002180">
    <property type="entry name" value="LS/RS"/>
</dbReference>
<dbReference type="InterPro" id="IPR036467">
    <property type="entry name" value="LS/RS_sf"/>
</dbReference>
<dbReference type="NCBIfam" id="TIGR00114">
    <property type="entry name" value="lumazine-synth"/>
    <property type="match status" value="1"/>
</dbReference>
<dbReference type="PANTHER" id="PTHR21058:SF0">
    <property type="entry name" value="6,7-DIMETHYL-8-RIBITYLLUMAZINE SYNTHASE"/>
    <property type="match status" value="1"/>
</dbReference>
<dbReference type="PANTHER" id="PTHR21058">
    <property type="entry name" value="6,7-DIMETHYL-8-RIBITYLLUMAZINE SYNTHASE DMRL SYNTHASE LUMAZINE SYNTHASE"/>
    <property type="match status" value="1"/>
</dbReference>
<dbReference type="Pfam" id="PF00885">
    <property type="entry name" value="DMRL_synthase"/>
    <property type="match status" value="1"/>
</dbReference>
<dbReference type="SUPFAM" id="SSF52121">
    <property type="entry name" value="Lumazine synthase"/>
    <property type="match status" value="1"/>
</dbReference>
<name>RISB_SYNY3</name>
<keyword id="KW-1185">Reference proteome</keyword>
<keyword id="KW-0686">Riboflavin biosynthesis</keyword>
<keyword id="KW-0808">Transferase</keyword>
<gene>
    <name evidence="1" type="primary">ribH</name>
    <name type="ordered locus">sll1282</name>
</gene>
<organism>
    <name type="scientific">Synechocystis sp. (strain ATCC 27184 / PCC 6803 / Kazusa)</name>
    <dbReference type="NCBI Taxonomy" id="1111708"/>
    <lineage>
        <taxon>Bacteria</taxon>
        <taxon>Bacillati</taxon>
        <taxon>Cyanobacteriota</taxon>
        <taxon>Cyanophyceae</taxon>
        <taxon>Synechococcales</taxon>
        <taxon>Merismopediaceae</taxon>
        <taxon>Synechocystis</taxon>
    </lineage>
</organism>
<feature type="chain" id="PRO_0000134821" description="6,7-dimethyl-8-ribityllumazine synthase">
    <location>
        <begin position="1"/>
        <end position="164"/>
    </location>
</feature>
<feature type="active site" description="Proton donor" evidence="1">
    <location>
        <position position="94"/>
    </location>
</feature>
<feature type="binding site" evidence="1">
    <location>
        <position position="24"/>
    </location>
    <ligand>
        <name>5-amino-6-(D-ribitylamino)uracil</name>
        <dbReference type="ChEBI" id="CHEBI:15934"/>
    </ligand>
</feature>
<feature type="binding site" evidence="1">
    <location>
        <begin position="62"/>
        <end position="64"/>
    </location>
    <ligand>
        <name>5-amino-6-(D-ribitylamino)uracil</name>
        <dbReference type="ChEBI" id="CHEBI:15934"/>
    </ligand>
</feature>
<feature type="binding site" evidence="1">
    <location>
        <begin position="86"/>
        <end position="88"/>
    </location>
    <ligand>
        <name>5-amino-6-(D-ribitylamino)uracil</name>
        <dbReference type="ChEBI" id="CHEBI:15934"/>
    </ligand>
</feature>
<feature type="binding site" evidence="1">
    <location>
        <begin position="91"/>
        <end position="92"/>
    </location>
    <ligand>
        <name>(2S)-2-hydroxy-3-oxobutyl phosphate</name>
        <dbReference type="ChEBI" id="CHEBI:58830"/>
    </ligand>
</feature>
<feature type="binding site" evidence="1">
    <location>
        <position position="119"/>
    </location>
    <ligand>
        <name>5-amino-6-(D-ribitylamino)uracil</name>
        <dbReference type="ChEBI" id="CHEBI:15934"/>
    </ligand>
</feature>
<feature type="binding site" evidence="1">
    <location>
        <position position="133"/>
    </location>
    <ligand>
        <name>(2S)-2-hydroxy-3-oxobutyl phosphate</name>
        <dbReference type="ChEBI" id="CHEBI:58830"/>
    </ligand>
</feature>
<comment type="function">
    <text evidence="1">Catalyzes the formation of 6,7-dimethyl-8-ribityllumazine by condensation of 5-amino-6-(D-ribitylamino)uracil with 3,4-dihydroxy-2-butanone 4-phosphate. This is the penultimate step in the biosynthesis of riboflavin.</text>
</comment>
<comment type="catalytic activity">
    <reaction evidence="1">
        <text>(2S)-2-hydroxy-3-oxobutyl phosphate + 5-amino-6-(D-ribitylamino)uracil = 6,7-dimethyl-8-(1-D-ribityl)lumazine + phosphate + 2 H2O + H(+)</text>
        <dbReference type="Rhea" id="RHEA:26152"/>
        <dbReference type="ChEBI" id="CHEBI:15377"/>
        <dbReference type="ChEBI" id="CHEBI:15378"/>
        <dbReference type="ChEBI" id="CHEBI:15934"/>
        <dbReference type="ChEBI" id="CHEBI:43474"/>
        <dbReference type="ChEBI" id="CHEBI:58201"/>
        <dbReference type="ChEBI" id="CHEBI:58830"/>
        <dbReference type="EC" id="2.5.1.78"/>
    </reaction>
</comment>
<comment type="pathway">
    <text evidence="1">Cofactor biosynthesis; riboflavin biosynthesis; riboflavin from 2-hydroxy-3-oxobutyl phosphate and 5-amino-6-(D-ribitylamino)uracil: step 1/2.</text>
</comment>
<comment type="similarity">
    <text evidence="1">Belongs to the DMRL synthase family.</text>
</comment>
<accession>P73527</accession>
<evidence type="ECO:0000255" key="1">
    <source>
        <dbReference type="HAMAP-Rule" id="MF_00178"/>
    </source>
</evidence>